<organism>
    <name type="scientific">Oryza sativa subsp. japonica</name>
    <name type="common">Rice</name>
    <dbReference type="NCBI Taxonomy" id="39947"/>
    <lineage>
        <taxon>Eukaryota</taxon>
        <taxon>Viridiplantae</taxon>
        <taxon>Streptophyta</taxon>
        <taxon>Embryophyta</taxon>
        <taxon>Tracheophyta</taxon>
        <taxon>Spermatophyta</taxon>
        <taxon>Magnoliopsida</taxon>
        <taxon>Liliopsida</taxon>
        <taxon>Poales</taxon>
        <taxon>Poaceae</taxon>
        <taxon>BOP clade</taxon>
        <taxon>Oryzoideae</taxon>
        <taxon>Oryzeae</taxon>
        <taxon>Oryzinae</taxon>
        <taxon>Oryza</taxon>
        <taxon>Oryza sativa</taxon>
    </lineage>
</organism>
<dbReference type="EMBL" id="AP004113">
    <property type="protein sequence ID" value="BAD25174.1"/>
    <property type="molecule type" value="Genomic_DNA"/>
</dbReference>
<dbReference type="EMBL" id="AP005071">
    <property type="protein sequence ID" value="BAD25726.1"/>
    <property type="molecule type" value="Genomic_DNA"/>
</dbReference>
<dbReference type="EMBL" id="AP008208">
    <property type="protein sequence ID" value="BAF07935.1"/>
    <property type="molecule type" value="Genomic_DNA"/>
</dbReference>
<dbReference type="EMBL" id="AP014958">
    <property type="protein sequence ID" value="BAS77186.1"/>
    <property type="molecule type" value="Genomic_DNA"/>
</dbReference>
<dbReference type="EMBL" id="CM000139">
    <property type="protein sequence ID" value="EEE56394.1"/>
    <property type="molecule type" value="Genomic_DNA"/>
</dbReference>
<dbReference type="EMBL" id="AK106247">
    <property type="protein sequence ID" value="BAG97655.1"/>
    <property type="molecule type" value="mRNA"/>
</dbReference>
<dbReference type="RefSeq" id="XP_015624008.1">
    <property type="nucleotide sequence ID" value="XM_015768522.1"/>
</dbReference>
<dbReference type="SMR" id="Q6H6C3"/>
<dbReference type="FunCoup" id="Q6H6C3">
    <property type="interactions" value="1860"/>
</dbReference>
<dbReference type="STRING" id="39947.Q6H6C3"/>
<dbReference type="PaxDb" id="39947-Q6H6C3"/>
<dbReference type="EnsemblPlants" id="Os02t0169400-01">
    <property type="protein sequence ID" value="Os02t0169400-01"/>
    <property type="gene ID" value="Os02g0169400"/>
</dbReference>
<dbReference type="Gramene" id="Os02t0169400-01">
    <property type="protein sequence ID" value="Os02t0169400-01"/>
    <property type="gene ID" value="Os02g0169400"/>
</dbReference>
<dbReference type="KEGG" id="dosa:Os02g0169400"/>
<dbReference type="eggNOG" id="KOG1041">
    <property type="taxonomic scope" value="Eukaryota"/>
</dbReference>
<dbReference type="HOGENOM" id="CLU_004544_0_1_1"/>
<dbReference type="InParanoid" id="Q6H6C3"/>
<dbReference type="OMA" id="EVCYGFY"/>
<dbReference type="OrthoDB" id="10252740at2759"/>
<dbReference type="Proteomes" id="UP000000763">
    <property type="component" value="Chromosome 2"/>
</dbReference>
<dbReference type="Proteomes" id="UP000007752">
    <property type="component" value="Chromosome 2"/>
</dbReference>
<dbReference type="Proteomes" id="UP000059680">
    <property type="component" value="Chromosome 2"/>
</dbReference>
<dbReference type="GO" id="GO:0005737">
    <property type="term" value="C:cytoplasm"/>
    <property type="evidence" value="ECO:0000318"/>
    <property type="project" value="GO_Central"/>
</dbReference>
<dbReference type="GO" id="GO:0005634">
    <property type="term" value="C:nucleus"/>
    <property type="evidence" value="ECO:0000318"/>
    <property type="project" value="GO_Central"/>
</dbReference>
<dbReference type="GO" id="GO:0003723">
    <property type="term" value="F:RNA binding"/>
    <property type="evidence" value="ECO:0000318"/>
    <property type="project" value="GO_Central"/>
</dbReference>
<dbReference type="GO" id="GO:0004521">
    <property type="term" value="F:RNA endonuclease activity"/>
    <property type="evidence" value="ECO:0000318"/>
    <property type="project" value="GO_Central"/>
</dbReference>
<dbReference type="GO" id="GO:0031047">
    <property type="term" value="P:regulatory ncRNA-mediated gene silencing"/>
    <property type="evidence" value="ECO:0000318"/>
    <property type="project" value="GO_Central"/>
</dbReference>
<dbReference type="CDD" id="cd02846">
    <property type="entry name" value="PAZ_argonaute_like"/>
    <property type="match status" value="1"/>
</dbReference>
<dbReference type="CDD" id="cd04657">
    <property type="entry name" value="Piwi_ago-like"/>
    <property type="match status" value="1"/>
</dbReference>
<dbReference type="FunFam" id="3.40.50.2300:FF:000110">
    <property type="entry name" value="Argonaute 10"/>
    <property type="match status" value="1"/>
</dbReference>
<dbReference type="Gene3D" id="3.40.50.2300">
    <property type="match status" value="1"/>
</dbReference>
<dbReference type="Gene3D" id="2.170.260.10">
    <property type="entry name" value="paz domain"/>
    <property type="match status" value="1"/>
</dbReference>
<dbReference type="Gene3D" id="3.30.420.10">
    <property type="entry name" value="Ribonuclease H-like superfamily/Ribonuclease H"/>
    <property type="match status" value="1"/>
</dbReference>
<dbReference type="InterPro" id="IPR014811">
    <property type="entry name" value="ArgoL1"/>
</dbReference>
<dbReference type="InterPro" id="IPR032472">
    <property type="entry name" value="ArgoL2"/>
</dbReference>
<dbReference type="InterPro" id="IPR032473">
    <property type="entry name" value="Argonaute_Mid_dom"/>
</dbReference>
<dbReference type="InterPro" id="IPR032474">
    <property type="entry name" value="Argonaute_N"/>
</dbReference>
<dbReference type="InterPro" id="IPR003100">
    <property type="entry name" value="PAZ_dom"/>
</dbReference>
<dbReference type="InterPro" id="IPR036085">
    <property type="entry name" value="PAZ_dom_sf"/>
</dbReference>
<dbReference type="InterPro" id="IPR003165">
    <property type="entry name" value="Piwi"/>
</dbReference>
<dbReference type="InterPro" id="IPR045246">
    <property type="entry name" value="Piwi_ago-like"/>
</dbReference>
<dbReference type="InterPro" id="IPR012337">
    <property type="entry name" value="RNaseH-like_sf"/>
</dbReference>
<dbReference type="InterPro" id="IPR036397">
    <property type="entry name" value="RNaseH_sf"/>
</dbReference>
<dbReference type="PANTHER" id="PTHR22891">
    <property type="entry name" value="EUKARYOTIC TRANSLATION INITIATION FACTOR 2C"/>
    <property type="match status" value="1"/>
</dbReference>
<dbReference type="Pfam" id="PF08699">
    <property type="entry name" value="ArgoL1"/>
    <property type="match status" value="1"/>
</dbReference>
<dbReference type="Pfam" id="PF16488">
    <property type="entry name" value="ArgoL2"/>
    <property type="match status" value="1"/>
</dbReference>
<dbReference type="Pfam" id="PF16487">
    <property type="entry name" value="ArgoMid"/>
    <property type="match status" value="1"/>
</dbReference>
<dbReference type="Pfam" id="PF16486">
    <property type="entry name" value="ArgoN"/>
    <property type="match status" value="1"/>
</dbReference>
<dbReference type="Pfam" id="PF02171">
    <property type="entry name" value="Piwi"/>
    <property type="match status" value="1"/>
</dbReference>
<dbReference type="SMART" id="SM01163">
    <property type="entry name" value="DUF1785"/>
    <property type="match status" value="1"/>
</dbReference>
<dbReference type="SMART" id="SM00950">
    <property type="entry name" value="Piwi"/>
    <property type="match status" value="1"/>
</dbReference>
<dbReference type="SUPFAM" id="SSF101690">
    <property type="entry name" value="PAZ domain"/>
    <property type="match status" value="1"/>
</dbReference>
<dbReference type="SUPFAM" id="SSF53098">
    <property type="entry name" value="Ribonuclease H-like"/>
    <property type="match status" value="1"/>
</dbReference>
<dbReference type="PROSITE" id="PS50821">
    <property type="entry name" value="PAZ"/>
    <property type="match status" value="1"/>
</dbReference>
<dbReference type="PROSITE" id="PS50822">
    <property type="entry name" value="PIWI"/>
    <property type="match status" value="1"/>
</dbReference>
<reference key="1">
    <citation type="journal article" date="2005" name="Nature">
        <title>The map-based sequence of the rice genome.</title>
        <authorList>
            <consortium name="International rice genome sequencing project (IRGSP)"/>
        </authorList>
    </citation>
    <scope>NUCLEOTIDE SEQUENCE [LARGE SCALE GENOMIC DNA]</scope>
    <source>
        <strain>cv. Nipponbare</strain>
    </source>
</reference>
<reference key="2">
    <citation type="journal article" date="2008" name="Nucleic Acids Res.">
        <title>The rice annotation project database (RAP-DB): 2008 update.</title>
        <authorList>
            <consortium name="The rice annotation project (RAP)"/>
        </authorList>
    </citation>
    <scope>GENOME REANNOTATION</scope>
    <source>
        <strain>cv. Nipponbare</strain>
    </source>
</reference>
<reference key="3">
    <citation type="journal article" date="2013" name="Rice">
        <title>Improvement of the Oryza sativa Nipponbare reference genome using next generation sequence and optical map data.</title>
        <authorList>
            <person name="Kawahara Y."/>
            <person name="de la Bastide M."/>
            <person name="Hamilton J.P."/>
            <person name="Kanamori H."/>
            <person name="McCombie W.R."/>
            <person name="Ouyang S."/>
            <person name="Schwartz D.C."/>
            <person name="Tanaka T."/>
            <person name="Wu J."/>
            <person name="Zhou S."/>
            <person name="Childs K.L."/>
            <person name="Davidson R.M."/>
            <person name="Lin H."/>
            <person name="Quesada-Ocampo L."/>
            <person name="Vaillancourt B."/>
            <person name="Sakai H."/>
            <person name="Lee S.S."/>
            <person name="Kim J."/>
            <person name="Numa H."/>
            <person name="Itoh T."/>
            <person name="Buell C.R."/>
            <person name="Matsumoto T."/>
        </authorList>
    </citation>
    <scope>GENOME REANNOTATION</scope>
    <source>
        <strain>cv. Nipponbare</strain>
    </source>
</reference>
<reference key="4">
    <citation type="journal article" date="2005" name="PLoS Biol.">
        <title>The genomes of Oryza sativa: a history of duplications.</title>
        <authorList>
            <person name="Yu J."/>
            <person name="Wang J."/>
            <person name="Lin W."/>
            <person name="Li S."/>
            <person name="Li H."/>
            <person name="Zhou J."/>
            <person name="Ni P."/>
            <person name="Dong W."/>
            <person name="Hu S."/>
            <person name="Zeng C."/>
            <person name="Zhang J."/>
            <person name="Zhang Y."/>
            <person name="Li R."/>
            <person name="Xu Z."/>
            <person name="Li S."/>
            <person name="Li X."/>
            <person name="Zheng H."/>
            <person name="Cong L."/>
            <person name="Lin L."/>
            <person name="Yin J."/>
            <person name="Geng J."/>
            <person name="Li G."/>
            <person name="Shi J."/>
            <person name="Liu J."/>
            <person name="Lv H."/>
            <person name="Li J."/>
            <person name="Wang J."/>
            <person name="Deng Y."/>
            <person name="Ran L."/>
            <person name="Shi X."/>
            <person name="Wang X."/>
            <person name="Wu Q."/>
            <person name="Li C."/>
            <person name="Ren X."/>
            <person name="Wang J."/>
            <person name="Wang X."/>
            <person name="Li D."/>
            <person name="Liu D."/>
            <person name="Zhang X."/>
            <person name="Ji Z."/>
            <person name="Zhao W."/>
            <person name="Sun Y."/>
            <person name="Zhang Z."/>
            <person name="Bao J."/>
            <person name="Han Y."/>
            <person name="Dong L."/>
            <person name="Ji J."/>
            <person name="Chen P."/>
            <person name="Wu S."/>
            <person name="Liu J."/>
            <person name="Xiao Y."/>
            <person name="Bu D."/>
            <person name="Tan J."/>
            <person name="Yang L."/>
            <person name="Ye C."/>
            <person name="Zhang J."/>
            <person name="Xu J."/>
            <person name="Zhou Y."/>
            <person name="Yu Y."/>
            <person name="Zhang B."/>
            <person name="Zhuang S."/>
            <person name="Wei H."/>
            <person name="Liu B."/>
            <person name="Lei M."/>
            <person name="Yu H."/>
            <person name="Li Y."/>
            <person name="Xu H."/>
            <person name="Wei S."/>
            <person name="He X."/>
            <person name="Fang L."/>
            <person name="Zhang Z."/>
            <person name="Zhang Y."/>
            <person name="Huang X."/>
            <person name="Su Z."/>
            <person name="Tong W."/>
            <person name="Li J."/>
            <person name="Tong Z."/>
            <person name="Li S."/>
            <person name="Ye J."/>
            <person name="Wang L."/>
            <person name="Fang L."/>
            <person name="Lei T."/>
            <person name="Chen C.-S."/>
            <person name="Chen H.-C."/>
            <person name="Xu Z."/>
            <person name="Li H."/>
            <person name="Huang H."/>
            <person name="Zhang F."/>
            <person name="Xu H."/>
            <person name="Li N."/>
            <person name="Zhao C."/>
            <person name="Li S."/>
            <person name="Dong L."/>
            <person name="Huang Y."/>
            <person name="Li L."/>
            <person name="Xi Y."/>
            <person name="Qi Q."/>
            <person name="Li W."/>
            <person name="Zhang B."/>
            <person name="Hu W."/>
            <person name="Zhang Y."/>
            <person name="Tian X."/>
            <person name="Jiao Y."/>
            <person name="Liang X."/>
            <person name="Jin J."/>
            <person name="Gao L."/>
            <person name="Zheng W."/>
            <person name="Hao B."/>
            <person name="Liu S.-M."/>
            <person name="Wang W."/>
            <person name="Yuan L."/>
            <person name="Cao M."/>
            <person name="McDermott J."/>
            <person name="Samudrala R."/>
            <person name="Wang J."/>
            <person name="Wong G.K.-S."/>
            <person name="Yang H."/>
        </authorList>
    </citation>
    <scope>NUCLEOTIDE SEQUENCE [LARGE SCALE GENOMIC DNA]</scope>
    <source>
        <strain>cv. Nipponbare</strain>
    </source>
</reference>
<reference key="5">
    <citation type="journal article" date="2003" name="Science">
        <title>Collection, mapping, and annotation of over 28,000 cDNA clones from japonica rice.</title>
        <authorList>
            <consortium name="The rice full-length cDNA consortium"/>
        </authorList>
    </citation>
    <scope>NUCLEOTIDE SEQUENCE [LARGE SCALE MRNA]</scope>
    <source>
        <strain>cv. Nipponbare</strain>
    </source>
</reference>
<reference key="6">
    <citation type="journal article" date="2008" name="BMC Genomics">
        <title>Genome-wide identification, organization and phylogenetic analysis of dicer-like, argonaute and RNA-dependent RNA polymerase gene families and their expression analysis during reproductive development and stress in rice.</title>
        <authorList>
            <person name="Kapoor M."/>
            <person name="Arora R."/>
            <person name="Lama T."/>
            <person name="Nijhawan A."/>
            <person name="Khurana J.P."/>
            <person name="Tyagi A.K."/>
            <person name="Kapoor S."/>
        </authorList>
    </citation>
    <scope>GENE FAMILY</scope>
    <scope>NOMENCLATURE</scope>
</reference>
<proteinExistence type="evidence at transcript level"/>
<name>AGO17_ORYSJ</name>
<feature type="chain" id="PRO_0000378440" description="Protein argonaute 17">
    <location>
        <begin position="1"/>
        <end position="876"/>
    </location>
</feature>
<feature type="domain" description="PAZ" evidence="2">
    <location>
        <begin position="246"/>
        <end position="338"/>
    </location>
</feature>
<feature type="domain" description="Piwi" evidence="3">
    <location>
        <begin position="514"/>
        <end position="834"/>
    </location>
</feature>
<feature type="region of interest" description="Disordered" evidence="4">
    <location>
        <begin position="839"/>
        <end position="859"/>
    </location>
</feature>
<keyword id="KW-1185">Reference proteome</keyword>
<keyword id="KW-0943">RNA-mediated gene silencing</keyword>
<sequence length="876" mass="98912">MESQRMTWLYDRHHSLKHNKAERQAILSTYRLAKRPNLSSEGMIGESCIVRTNCFSVHLESLDDQTIYEYDVCVTPEVGINRAVIRELVKQQKDSGLGGRLPAYDGRKRLYTSGPLPFDSHRFLVLLDSIEDSPEESRHLRVRDFVVTLKFAAKISLWTLRKFRGGKPNRESRAALRALDVVLKELPTARYTQFAGSFYSPNLGECRQLCKVLESWRGFHQRIQATQMGLQLNIDVSSSVFIKPVPVVDYVAQLLNEDILLDRPLCSTEFLKIKEALEGLKVQINGILFNTYHVQDLVHQAASFPVNFSIQYPSLPCLKVAHFGETIFLPLEVCKIAEGQCHQKQLNAKHMAALLQVARQPPNERDYNILQTVHQNKYQEDPHAKEFGIKIEEKLVSIKSRILPAPWLKFHDSGETTEFLPQLGIWNMMHKKMINGGRVKSWACVNFCWSVREYAARNFCYDLGFMCRESGMVFSVKPVLPLVIAKPGCVESALRTLHDDVMDILRPQGRKLDLLIVILPNNNGSLYGDVKRICETDIGLISQCCLAKHVLKMNKWYLASVALKINAKMGGRNTVLVDALEMRLPHVRDTPTIVFGAHVTHPHPGKANSSSIAAVVASQDWPEVTKYAGLISVQACHQESIQGLFKVQDDPERGTTTSGMIKEHLMSFYRATKRKPGRIIFYRDGVSKGQLPQALMHELGAIKMACASMGPDYNPLVTYVVLQKCRHTRLFADYYNANTHDSTANIRAGTVVDSNICQPNQFDFYLCSHRSTQGTKRPRYYHVLWDENDFLAGSFQELTNYLCYTSATCTQSISVVAPVHYARLLSSRARCYIKPRSIGDSTSHTSLPSEEDSSAASETGSLLPIKDNLKGAMFFC</sequence>
<gene>
    <name type="primary">AGO17</name>
    <name type="ordered locus">Os02g0169400</name>
    <name type="ordered locus">LOC_Os02g07310</name>
    <name type="ORF">OJ1116_A06.3</name>
    <name type="ORF">OsJ_05545</name>
    <name type="ORF">P0669G09.26</name>
</gene>
<protein>
    <recommendedName>
        <fullName>Protein argonaute 17</fullName>
        <shortName>OsAGO17</shortName>
    </recommendedName>
</protein>
<evidence type="ECO:0000250" key="1"/>
<evidence type="ECO:0000255" key="2">
    <source>
        <dbReference type="PROSITE-ProRule" id="PRU00142"/>
    </source>
</evidence>
<evidence type="ECO:0000255" key="3">
    <source>
        <dbReference type="PROSITE-ProRule" id="PRU00150"/>
    </source>
</evidence>
<evidence type="ECO:0000256" key="4">
    <source>
        <dbReference type="SAM" id="MobiDB-lite"/>
    </source>
</evidence>
<evidence type="ECO:0000305" key="5"/>
<comment type="function">
    <text evidence="1">Probably involved in the RNA silencing pathway. May bind to short RNAs such as microRNAs (miRNAs) or short interfering RNAs (siRNAs), and represses the translation of mRNAs which are complementary to them (By similarity).</text>
</comment>
<comment type="similarity">
    <text evidence="5">Belongs to the argonaute family. Ago subfamily.</text>
</comment>
<accession>Q6H6C3</accession>
<accession>A0A0P0VFD0</accession>